<dbReference type="EMBL" id="AM181176">
    <property type="protein sequence ID" value="CAY50639.1"/>
    <property type="molecule type" value="Genomic_DNA"/>
</dbReference>
<dbReference type="RefSeq" id="WP_003174975.1">
    <property type="nucleotide sequence ID" value="NC_012660.1"/>
</dbReference>
<dbReference type="SMR" id="C3JZN4"/>
<dbReference type="STRING" id="294.SRM1_02092"/>
<dbReference type="GeneID" id="97920874"/>
<dbReference type="eggNOG" id="COG0292">
    <property type="taxonomic scope" value="Bacteria"/>
</dbReference>
<dbReference type="HOGENOM" id="CLU_123265_0_1_6"/>
<dbReference type="OrthoDB" id="9808966at2"/>
<dbReference type="GO" id="GO:1990904">
    <property type="term" value="C:ribonucleoprotein complex"/>
    <property type="evidence" value="ECO:0007669"/>
    <property type="project" value="UniProtKB-KW"/>
</dbReference>
<dbReference type="GO" id="GO:0005840">
    <property type="term" value="C:ribosome"/>
    <property type="evidence" value="ECO:0007669"/>
    <property type="project" value="UniProtKB-KW"/>
</dbReference>
<dbReference type="GO" id="GO:0019843">
    <property type="term" value="F:rRNA binding"/>
    <property type="evidence" value="ECO:0007669"/>
    <property type="project" value="UniProtKB-UniRule"/>
</dbReference>
<dbReference type="GO" id="GO:0003735">
    <property type="term" value="F:structural constituent of ribosome"/>
    <property type="evidence" value="ECO:0007669"/>
    <property type="project" value="InterPro"/>
</dbReference>
<dbReference type="GO" id="GO:0000027">
    <property type="term" value="P:ribosomal large subunit assembly"/>
    <property type="evidence" value="ECO:0007669"/>
    <property type="project" value="UniProtKB-UniRule"/>
</dbReference>
<dbReference type="GO" id="GO:0006412">
    <property type="term" value="P:translation"/>
    <property type="evidence" value="ECO:0007669"/>
    <property type="project" value="InterPro"/>
</dbReference>
<dbReference type="CDD" id="cd07026">
    <property type="entry name" value="Ribosomal_L20"/>
    <property type="match status" value="1"/>
</dbReference>
<dbReference type="FunFam" id="1.10.1900.20:FF:000001">
    <property type="entry name" value="50S ribosomal protein L20"/>
    <property type="match status" value="1"/>
</dbReference>
<dbReference type="Gene3D" id="6.10.160.10">
    <property type="match status" value="1"/>
</dbReference>
<dbReference type="Gene3D" id="1.10.1900.20">
    <property type="entry name" value="Ribosomal protein L20"/>
    <property type="match status" value="1"/>
</dbReference>
<dbReference type="HAMAP" id="MF_00382">
    <property type="entry name" value="Ribosomal_bL20"/>
    <property type="match status" value="1"/>
</dbReference>
<dbReference type="InterPro" id="IPR005813">
    <property type="entry name" value="Ribosomal_bL20"/>
</dbReference>
<dbReference type="InterPro" id="IPR049946">
    <property type="entry name" value="RIBOSOMAL_L20_CS"/>
</dbReference>
<dbReference type="InterPro" id="IPR035566">
    <property type="entry name" value="Ribosomal_protein_bL20_C"/>
</dbReference>
<dbReference type="NCBIfam" id="TIGR01032">
    <property type="entry name" value="rplT_bact"/>
    <property type="match status" value="1"/>
</dbReference>
<dbReference type="PANTHER" id="PTHR10986">
    <property type="entry name" value="39S RIBOSOMAL PROTEIN L20"/>
    <property type="match status" value="1"/>
</dbReference>
<dbReference type="Pfam" id="PF00453">
    <property type="entry name" value="Ribosomal_L20"/>
    <property type="match status" value="1"/>
</dbReference>
<dbReference type="PRINTS" id="PR00062">
    <property type="entry name" value="RIBOSOMALL20"/>
</dbReference>
<dbReference type="SUPFAM" id="SSF74731">
    <property type="entry name" value="Ribosomal protein L20"/>
    <property type="match status" value="1"/>
</dbReference>
<dbReference type="PROSITE" id="PS00937">
    <property type="entry name" value="RIBOSOMAL_L20"/>
    <property type="match status" value="1"/>
</dbReference>
<feature type="chain" id="PRO_1000205722" description="Large ribosomal subunit protein bL20">
    <location>
        <begin position="1"/>
        <end position="118"/>
    </location>
</feature>
<sequence>MARVKRGVIARKRHKKILKLAKGYYGARSRVFRVAKQAVIKAGQYAYRDRRQKKRQFRALWIARINAGARVNGLSYSRFIAGLKKASIEIDRKVLAELAVNEKAVFAAIVEKAKATLA</sequence>
<keyword id="KW-0687">Ribonucleoprotein</keyword>
<keyword id="KW-0689">Ribosomal protein</keyword>
<keyword id="KW-0694">RNA-binding</keyword>
<keyword id="KW-0699">rRNA-binding</keyword>
<protein>
    <recommendedName>
        <fullName evidence="1">Large ribosomal subunit protein bL20</fullName>
    </recommendedName>
    <alternativeName>
        <fullName evidence="2">50S ribosomal protein L20</fullName>
    </alternativeName>
</protein>
<comment type="function">
    <text evidence="1">Binds directly to 23S ribosomal RNA and is necessary for the in vitro assembly process of the 50S ribosomal subunit. It is not involved in the protein synthesizing functions of that subunit.</text>
</comment>
<comment type="similarity">
    <text evidence="1">Belongs to the bacterial ribosomal protein bL20 family.</text>
</comment>
<name>RL20_PSEFS</name>
<evidence type="ECO:0000255" key="1">
    <source>
        <dbReference type="HAMAP-Rule" id="MF_00382"/>
    </source>
</evidence>
<evidence type="ECO:0000305" key="2"/>
<proteinExistence type="inferred from homology"/>
<gene>
    <name evidence="1" type="primary">rplT</name>
    <name type="ordered locus">PFLU_4145</name>
</gene>
<reference key="1">
    <citation type="journal article" date="2009" name="Genome Biol.">
        <title>Genomic and genetic analyses of diversity and plant interactions of Pseudomonas fluorescens.</title>
        <authorList>
            <person name="Silby M.W."/>
            <person name="Cerdeno-Tarraga A.M."/>
            <person name="Vernikos G.S."/>
            <person name="Giddens S.R."/>
            <person name="Jackson R.W."/>
            <person name="Preston G.M."/>
            <person name="Zhang X.-X."/>
            <person name="Moon C.D."/>
            <person name="Gehrig S.M."/>
            <person name="Godfrey S.A.C."/>
            <person name="Knight C.G."/>
            <person name="Malone J.G."/>
            <person name="Robinson Z."/>
            <person name="Spiers A.J."/>
            <person name="Harris S."/>
            <person name="Challis G.L."/>
            <person name="Yaxley A.M."/>
            <person name="Harris D."/>
            <person name="Seeger K."/>
            <person name="Murphy L."/>
            <person name="Rutter S."/>
            <person name="Squares R."/>
            <person name="Quail M.A."/>
            <person name="Saunders E."/>
            <person name="Mavromatis K."/>
            <person name="Brettin T.S."/>
            <person name="Bentley S.D."/>
            <person name="Hothersall J."/>
            <person name="Stephens E."/>
            <person name="Thomas C.M."/>
            <person name="Parkhill J."/>
            <person name="Levy S.B."/>
            <person name="Rainey P.B."/>
            <person name="Thomson N.R."/>
        </authorList>
    </citation>
    <scope>NUCLEOTIDE SEQUENCE [LARGE SCALE GENOMIC DNA]</scope>
    <source>
        <strain>SBW25</strain>
    </source>
</reference>
<organism>
    <name type="scientific">Pseudomonas fluorescens (strain SBW25)</name>
    <dbReference type="NCBI Taxonomy" id="216595"/>
    <lineage>
        <taxon>Bacteria</taxon>
        <taxon>Pseudomonadati</taxon>
        <taxon>Pseudomonadota</taxon>
        <taxon>Gammaproteobacteria</taxon>
        <taxon>Pseudomonadales</taxon>
        <taxon>Pseudomonadaceae</taxon>
        <taxon>Pseudomonas</taxon>
    </lineage>
</organism>
<accession>C3JZN4</accession>